<reference key="1">
    <citation type="submission" date="2008-02" db="EMBL/GenBank/DDBJ databases">
        <title>Genome sequence of Ureaplasma parvum serovar 3.</title>
        <authorList>
            <person name="Methe B.A."/>
            <person name="Glass J."/>
            <person name="Waites K."/>
            <person name="Shrivastava S."/>
        </authorList>
    </citation>
    <scope>NUCLEOTIDE SEQUENCE [LARGE SCALE GENOMIC DNA]</scope>
    <source>
        <strain>ATCC 27815 / 27 / NCTC 11736</strain>
    </source>
</reference>
<accession>B1AJ04</accession>
<evidence type="ECO:0000255" key="1">
    <source>
        <dbReference type="HAMAP-Rule" id="MF_00534"/>
    </source>
</evidence>
<dbReference type="EC" id="6.1.1.22" evidence="1"/>
<dbReference type="EMBL" id="CP000942">
    <property type="protein sequence ID" value="ACA32990.1"/>
    <property type="molecule type" value="Genomic_DNA"/>
</dbReference>
<dbReference type="RefSeq" id="WP_006688779.1">
    <property type="nucleotide sequence ID" value="NC_010503.1"/>
</dbReference>
<dbReference type="SMR" id="B1AJ04"/>
<dbReference type="GeneID" id="29672210"/>
<dbReference type="KEGG" id="upa:UPA3_0381"/>
<dbReference type="HOGENOM" id="CLU_004553_2_0_14"/>
<dbReference type="Proteomes" id="UP000002162">
    <property type="component" value="Chromosome"/>
</dbReference>
<dbReference type="GO" id="GO:0005737">
    <property type="term" value="C:cytoplasm"/>
    <property type="evidence" value="ECO:0007669"/>
    <property type="project" value="UniProtKB-SubCell"/>
</dbReference>
<dbReference type="GO" id="GO:0004816">
    <property type="term" value="F:asparagine-tRNA ligase activity"/>
    <property type="evidence" value="ECO:0007669"/>
    <property type="project" value="UniProtKB-UniRule"/>
</dbReference>
<dbReference type="GO" id="GO:0005524">
    <property type="term" value="F:ATP binding"/>
    <property type="evidence" value="ECO:0007669"/>
    <property type="project" value="UniProtKB-UniRule"/>
</dbReference>
<dbReference type="GO" id="GO:0003676">
    <property type="term" value="F:nucleic acid binding"/>
    <property type="evidence" value="ECO:0007669"/>
    <property type="project" value="InterPro"/>
</dbReference>
<dbReference type="GO" id="GO:0006421">
    <property type="term" value="P:asparaginyl-tRNA aminoacylation"/>
    <property type="evidence" value="ECO:0007669"/>
    <property type="project" value="UniProtKB-UniRule"/>
</dbReference>
<dbReference type="CDD" id="cd00776">
    <property type="entry name" value="AsxRS_core"/>
    <property type="match status" value="1"/>
</dbReference>
<dbReference type="CDD" id="cd04318">
    <property type="entry name" value="EcAsnRS_like_N"/>
    <property type="match status" value="1"/>
</dbReference>
<dbReference type="FunFam" id="3.30.930.10:FF:000016">
    <property type="entry name" value="Asparagine--tRNA ligase"/>
    <property type="match status" value="1"/>
</dbReference>
<dbReference type="Gene3D" id="3.30.930.10">
    <property type="entry name" value="Bira Bifunctional Protein, Domain 2"/>
    <property type="match status" value="1"/>
</dbReference>
<dbReference type="Gene3D" id="2.40.50.140">
    <property type="entry name" value="Nucleic acid-binding proteins"/>
    <property type="match status" value="1"/>
</dbReference>
<dbReference type="HAMAP" id="MF_00534">
    <property type="entry name" value="Asn_tRNA_synth"/>
    <property type="match status" value="1"/>
</dbReference>
<dbReference type="InterPro" id="IPR004364">
    <property type="entry name" value="Aa-tRNA-synt_II"/>
</dbReference>
<dbReference type="InterPro" id="IPR006195">
    <property type="entry name" value="aa-tRNA-synth_II"/>
</dbReference>
<dbReference type="InterPro" id="IPR045864">
    <property type="entry name" value="aa-tRNA-synth_II/BPL/LPL"/>
</dbReference>
<dbReference type="InterPro" id="IPR004522">
    <property type="entry name" value="Asn-tRNA-ligase"/>
</dbReference>
<dbReference type="InterPro" id="IPR002312">
    <property type="entry name" value="Asp/Asn-tRNA-synth_IIb"/>
</dbReference>
<dbReference type="InterPro" id="IPR012340">
    <property type="entry name" value="NA-bd_OB-fold"/>
</dbReference>
<dbReference type="InterPro" id="IPR004365">
    <property type="entry name" value="NA-bd_OB_tRNA"/>
</dbReference>
<dbReference type="NCBIfam" id="TIGR00457">
    <property type="entry name" value="asnS"/>
    <property type="match status" value="1"/>
</dbReference>
<dbReference type="NCBIfam" id="NF003037">
    <property type="entry name" value="PRK03932.1"/>
    <property type="match status" value="1"/>
</dbReference>
<dbReference type="PANTHER" id="PTHR22594:SF34">
    <property type="entry name" value="ASPARAGINE--TRNA LIGASE, MITOCHONDRIAL-RELATED"/>
    <property type="match status" value="1"/>
</dbReference>
<dbReference type="PANTHER" id="PTHR22594">
    <property type="entry name" value="ASPARTYL/LYSYL-TRNA SYNTHETASE"/>
    <property type="match status" value="1"/>
</dbReference>
<dbReference type="Pfam" id="PF00152">
    <property type="entry name" value="tRNA-synt_2"/>
    <property type="match status" value="1"/>
</dbReference>
<dbReference type="Pfam" id="PF01336">
    <property type="entry name" value="tRNA_anti-codon"/>
    <property type="match status" value="1"/>
</dbReference>
<dbReference type="PRINTS" id="PR01042">
    <property type="entry name" value="TRNASYNTHASP"/>
</dbReference>
<dbReference type="SUPFAM" id="SSF55681">
    <property type="entry name" value="Class II aaRS and biotin synthetases"/>
    <property type="match status" value="1"/>
</dbReference>
<dbReference type="SUPFAM" id="SSF50249">
    <property type="entry name" value="Nucleic acid-binding proteins"/>
    <property type="match status" value="1"/>
</dbReference>
<dbReference type="PROSITE" id="PS50862">
    <property type="entry name" value="AA_TRNA_LIGASE_II"/>
    <property type="match status" value="1"/>
</dbReference>
<comment type="catalytic activity">
    <reaction evidence="1">
        <text>tRNA(Asn) + L-asparagine + ATP = L-asparaginyl-tRNA(Asn) + AMP + diphosphate + H(+)</text>
        <dbReference type="Rhea" id="RHEA:11180"/>
        <dbReference type="Rhea" id="RHEA-COMP:9659"/>
        <dbReference type="Rhea" id="RHEA-COMP:9674"/>
        <dbReference type="ChEBI" id="CHEBI:15378"/>
        <dbReference type="ChEBI" id="CHEBI:30616"/>
        <dbReference type="ChEBI" id="CHEBI:33019"/>
        <dbReference type="ChEBI" id="CHEBI:58048"/>
        <dbReference type="ChEBI" id="CHEBI:78442"/>
        <dbReference type="ChEBI" id="CHEBI:78515"/>
        <dbReference type="ChEBI" id="CHEBI:456215"/>
        <dbReference type="EC" id="6.1.1.22"/>
    </reaction>
</comment>
<comment type="subunit">
    <text evidence="1">Homodimer.</text>
</comment>
<comment type="subcellular location">
    <subcellularLocation>
        <location evidence="1">Cytoplasm</location>
    </subcellularLocation>
</comment>
<comment type="similarity">
    <text evidence="1">Belongs to the class-II aminoacyl-tRNA synthetase family.</text>
</comment>
<keyword id="KW-0030">Aminoacyl-tRNA synthetase</keyword>
<keyword id="KW-0067">ATP-binding</keyword>
<keyword id="KW-0963">Cytoplasm</keyword>
<keyword id="KW-0436">Ligase</keyword>
<keyword id="KW-0547">Nucleotide-binding</keyword>
<keyword id="KW-0648">Protein biosynthesis</keyword>
<gene>
    <name evidence="1" type="primary">asnS</name>
    <name type="ordered locus">UPA3_0381</name>
</gene>
<sequence length="454" mass="52314">MQLKIKEIFNQDYVKLEGQKIQIKAWVRSNRDSKKIGFLVLNDGSSLTNLQAVYRVDKIDNYEEIAAARMWAAVVIEGVIKLTPTAKQPLELEVLNAQILKQSDEDFLLSNNDLNLETLRLNAHLRPRTNLFHAIMKVRATLAFAVHEFMNQNEYSWLAAPLFTGNDAEGAGETFSIQKFDNEEFFGKQTHLSVTGQLQAEAYAQAFGNVYTFGPTFRAEKSHTNRHLAEFWMIEPEMAFVDLKGMQDIVEDLVKHVIKAVLEKNQQELEFLAQRNDENLIKKLQKVVESKFERIEYKDAVKILADAVKNGHQFENNEIFFGMDLGSEHERYMCETYHQGPVFLQNYPKDIKAFYMKLNDDQQTVASTDLLIPGVGELVGGSQREDSYEKLLKRCQELKMPIESLQWYLDLRRFGYYMSSGFGIGFERLVMYVTGVNNIKDTIPFPRSHGQIEF</sequence>
<organism>
    <name type="scientific">Ureaplasma parvum serovar 3 (strain ATCC 27815 / 27 / NCTC 11736)</name>
    <dbReference type="NCBI Taxonomy" id="505682"/>
    <lineage>
        <taxon>Bacteria</taxon>
        <taxon>Bacillati</taxon>
        <taxon>Mycoplasmatota</taxon>
        <taxon>Mycoplasmoidales</taxon>
        <taxon>Mycoplasmoidaceae</taxon>
        <taxon>Ureaplasma</taxon>
    </lineage>
</organism>
<feature type="chain" id="PRO_1000081861" description="Asparagine--tRNA ligase">
    <location>
        <begin position="1"/>
        <end position="454"/>
    </location>
</feature>
<proteinExistence type="inferred from homology"/>
<protein>
    <recommendedName>
        <fullName evidence="1">Asparagine--tRNA ligase</fullName>
        <ecNumber evidence="1">6.1.1.22</ecNumber>
    </recommendedName>
    <alternativeName>
        <fullName evidence="1">Asparaginyl-tRNA synthetase</fullName>
        <shortName evidence="1">AsnRS</shortName>
    </alternativeName>
</protein>
<name>SYN_UREP2</name>